<sequence>MSRLIIVFIVVTMICAATALSSKKSINEDEKDEKRSVAVAGAVIEGATLTFNVLQTVLKALGDISRKIAVGIDNESGMTWTAMNTYFRSGTSDVILPHTVPHGKALLYNGQKDRGPVATGVVGVLAYAMSDGNTLAVLFSIPFDYNLYSNWWNVKVYKGHRRADQRMYEELYYNLSPFRGDNGWHNRDLGYGLKGRGFMNSSGQSILEIHVTKA</sequence>
<dbReference type="EMBL" id="U51900">
    <property type="protein sequence ID" value="AAC05720.1"/>
    <property type="molecule type" value="mRNA"/>
</dbReference>
<dbReference type="SMR" id="Q93109"/>
<dbReference type="TCDB" id="1.C.38.1.9">
    <property type="family name" value="the pore-forming equinatoxin (equinatoxin) family"/>
</dbReference>
<dbReference type="EnsemblMetazoa" id="EGACTEQ4350002124-RA">
    <property type="protein sequence ID" value="EGACTEQ4350002124-PA"/>
    <property type="gene ID" value="EGACTEQ4350002124"/>
</dbReference>
<dbReference type="OrthoDB" id="5954752at2759"/>
<dbReference type="GO" id="GO:0005576">
    <property type="term" value="C:extracellular region"/>
    <property type="evidence" value="ECO:0007669"/>
    <property type="project" value="UniProtKB-SubCell"/>
</dbReference>
<dbReference type="GO" id="GO:0042151">
    <property type="term" value="C:nematocyst"/>
    <property type="evidence" value="ECO:0007669"/>
    <property type="project" value="UniProtKB-SubCell"/>
</dbReference>
<dbReference type="GO" id="GO:0044218">
    <property type="term" value="C:other organism cell membrane"/>
    <property type="evidence" value="ECO:0007669"/>
    <property type="project" value="UniProtKB-KW"/>
</dbReference>
<dbReference type="GO" id="GO:0046930">
    <property type="term" value="C:pore complex"/>
    <property type="evidence" value="ECO:0007669"/>
    <property type="project" value="InterPro"/>
</dbReference>
<dbReference type="GO" id="GO:0015267">
    <property type="term" value="F:channel activity"/>
    <property type="evidence" value="ECO:0007669"/>
    <property type="project" value="InterPro"/>
</dbReference>
<dbReference type="GO" id="GO:0090729">
    <property type="term" value="F:toxin activity"/>
    <property type="evidence" value="ECO:0007669"/>
    <property type="project" value="UniProtKB-KW"/>
</dbReference>
<dbReference type="GO" id="GO:0051715">
    <property type="term" value="P:cytolysis in another organism"/>
    <property type="evidence" value="ECO:0007669"/>
    <property type="project" value="InterPro"/>
</dbReference>
<dbReference type="GO" id="GO:0006812">
    <property type="term" value="P:monoatomic cation transport"/>
    <property type="evidence" value="ECO:0007669"/>
    <property type="project" value="InterPro"/>
</dbReference>
<dbReference type="GO" id="GO:0046931">
    <property type="term" value="P:pore complex assembly"/>
    <property type="evidence" value="ECO:0007669"/>
    <property type="project" value="InterPro"/>
</dbReference>
<dbReference type="FunFam" id="2.60.270.20:FF:000001">
    <property type="entry name" value="DELTA-actitoxin-Afr1a"/>
    <property type="match status" value="1"/>
</dbReference>
<dbReference type="Gene3D" id="2.60.270.20">
    <property type="entry name" value="Cytolysin/lectin"/>
    <property type="match status" value="1"/>
</dbReference>
<dbReference type="InterPro" id="IPR050677">
    <property type="entry name" value="Actinoporin_PFT"/>
</dbReference>
<dbReference type="InterPro" id="IPR009104">
    <property type="entry name" value="Anemon_actinoporin-like"/>
</dbReference>
<dbReference type="InterPro" id="IPR015926">
    <property type="entry name" value="Cytolysin/lectin"/>
</dbReference>
<dbReference type="PANTHER" id="PTHR40388">
    <property type="entry name" value="BRYOPORIN"/>
    <property type="match status" value="1"/>
</dbReference>
<dbReference type="PANTHER" id="PTHR40388:SF1">
    <property type="entry name" value="BRYOPORIN"/>
    <property type="match status" value="1"/>
</dbReference>
<dbReference type="Pfam" id="PF06369">
    <property type="entry name" value="Anemone_cytotox"/>
    <property type="match status" value="1"/>
</dbReference>
<dbReference type="SUPFAM" id="SSF63724">
    <property type="entry name" value="Cytolysin/lectin"/>
    <property type="match status" value="1"/>
</dbReference>
<reference key="1">
    <citation type="journal article" date="1997" name="Biochim. Biophys. Acta">
        <title>Sequence analysis of the cDNA encoding the precursor of equinatoxin V, a newly discovered hemolysin from the sea anemone Actinia equina.</title>
        <authorList>
            <person name="Pungercar J."/>
            <person name="Anderluh G."/>
            <person name="Macek P."/>
            <person name="Franc G."/>
            <person name="Strukelj B."/>
        </authorList>
    </citation>
    <scope>NUCLEOTIDE SEQUENCE [MRNA]</scope>
</reference>
<reference key="2">
    <citation type="journal article" date="2009" name="Toxicon">
        <title>Molecular mechanism of pore formation by actinoporins.</title>
        <authorList>
            <person name="Kristan K.C."/>
            <person name="Viero G."/>
            <person name="Dalla Serra M."/>
            <person name="Macek P."/>
            <person name="Anderluh G."/>
        </authorList>
    </citation>
    <scope>REVIEW</scope>
</reference>
<reference key="3">
    <citation type="journal article" date="2012" name="Toxicon">
        <title>Development of a rational nomenclature for naming peptide and protein toxins from sea anemones.</title>
        <authorList>
            <person name="Oliveira J.S."/>
            <person name="Fuentes-Silva D."/>
            <person name="King G.F."/>
        </authorList>
    </citation>
    <scope>NOMENCLATURE</scope>
</reference>
<feature type="signal peptide" evidence="5">
    <location>
        <begin position="1"/>
        <end position="19"/>
    </location>
</feature>
<feature type="propeptide" id="PRO_0000034834" evidence="1">
    <location>
        <begin position="20"/>
        <end position="35"/>
    </location>
</feature>
<feature type="chain" id="PRO_0000034835" description="DELTA-actitoxin-Aeq1b">
    <location>
        <begin position="36"/>
        <end position="214"/>
    </location>
</feature>
<feature type="region of interest" description="Plays an important role in the hemolytic activity" evidence="3">
    <location>
        <begin position="38"/>
        <end position="47"/>
    </location>
</feature>
<feature type="region of interest" description="N-terminal region" evidence="4">
    <location>
        <begin position="46"/>
        <end position="65"/>
    </location>
</feature>
<feature type="region of interest" description="Trp-rich region, which is important for the binding to lipid membrane" evidence="4">
    <location>
        <begin position="140"/>
        <end position="155"/>
    </location>
</feature>
<feature type="short sequence motif" description="Cell attachment site, crucial for protein stability" evidence="3 5">
    <location>
        <begin position="179"/>
        <end position="181"/>
    </location>
</feature>
<feature type="binding site" evidence="3">
    <location>
        <position position="89"/>
    </location>
    <ligand>
        <name>phosphocholine</name>
        <dbReference type="ChEBI" id="CHEBI:295975"/>
    </ligand>
</feature>
<feature type="binding site" evidence="3">
    <location>
        <position position="122"/>
    </location>
    <ligand>
        <name>phosphocholine</name>
        <dbReference type="ChEBI" id="CHEBI:295975"/>
    </ligand>
</feature>
<feature type="binding site" evidence="3">
    <location>
        <position position="140"/>
    </location>
    <ligand>
        <name>phosphocholine</name>
        <dbReference type="ChEBI" id="CHEBI:295975"/>
    </ligand>
</feature>
<feature type="binding site" evidence="3">
    <location>
        <position position="142"/>
    </location>
    <ligand>
        <name>phosphocholine</name>
        <dbReference type="ChEBI" id="CHEBI:295975"/>
    </ligand>
</feature>
<feature type="binding site" evidence="3">
    <location>
        <position position="168"/>
    </location>
    <ligand>
        <name>phosphocholine</name>
        <dbReference type="ChEBI" id="CHEBI:295975"/>
    </ligand>
</feature>
<feature type="binding site" evidence="3">
    <location>
        <position position="172"/>
    </location>
    <ligand>
        <name>phosphocholine</name>
        <dbReference type="ChEBI" id="CHEBI:295975"/>
    </ligand>
</feature>
<feature type="binding site" evidence="3">
    <location>
        <position position="173"/>
    </location>
    <ligand>
        <name>phosphocholine</name>
        <dbReference type="ChEBI" id="CHEBI:295975"/>
    </ligand>
</feature>
<feature type="site" description="Important in the initial contact with the lipid membrane" evidence="4">
    <location>
        <position position="148"/>
    </location>
</feature>
<feature type="site" description="Interacts with the lipid membrane" evidence="4">
    <location>
        <position position="179"/>
    </location>
</feature>
<protein>
    <recommendedName>
        <fullName evidence="6">DELTA-actitoxin-Aeq1b</fullName>
        <shortName evidence="6">DELTA-AITX-Aeq1b</shortName>
    </recommendedName>
    <alternativeName>
        <fullName evidence="7">Equinatoxin V</fullName>
        <shortName>Eqt V</shortName>
        <shortName evidence="7">EqtV</shortName>
    </alternativeName>
    <alternativeName>
        <fullName evidence="8">Equinatoxin-5</fullName>
    </alternativeName>
</protein>
<proteinExistence type="evidence at transcript level"/>
<organism>
    <name type="scientific">Actinia equina</name>
    <name type="common">Beadlet anemone</name>
    <dbReference type="NCBI Taxonomy" id="6106"/>
    <lineage>
        <taxon>Eukaryota</taxon>
        <taxon>Metazoa</taxon>
        <taxon>Cnidaria</taxon>
        <taxon>Anthozoa</taxon>
        <taxon>Hexacorallia</taxon>
        <taxon>Actiniaria</taxon>
        <taxon>Actiniidae</taxon>
        <taxon>Actinia</taxon>
    </lineage>
</organism>
<evidence type="ECO:0000250" key="1"/>
<evidence type="ECO:0000250" key="2">
    <source>
        <dbReference type="UniProtKB" id="B9W5G6"/>
    </source>
</evidence>
<evidence type="ECO:0000250" key="3">
    <source>
        <dbReference type="UniProtKB" id="P07845"/>
    </source>
</evidence>
<evidence type="ECO:0000250" key="4">
    <source>
        <dbReference type="UniProtKB" id="P61914"/>
    </source>
</evidence>
<evidence type="ECO:0000255" key="5"/>
<evidence type="ECO:0000303" key="6">
    <source>
    </source>
</evidence>
<evidence type="ECO:0000303" key="7">
    <source>
    </source>
</evidence>
<evidence type="ECO:0000305" key="8"/>
<accession>Q93109</accession>
<comment type="function">
    <text>Pore-forming protein that forms cations-selective hydrophilic pores of around 1 nm and causes cytolysis. Pore formation is a multi-step process that involves specific recognition of membrane sphingomyelin (but neither cholesterol nor phosphatidylcholine) using aromatic rich region and adjacent phosphocholine (POC) binding site, firm binding to the membrane (mainly driven by hydrophobic interactions) accompanied by the transfer of the N-terminal region to the lipid-water interface and finally pore formation after oligomerization of monomers.</text>
</comment>
<comment type="subunit">
    <text evidence="2">Octamer or nonamer in membranes. Monomer in the soluble state.</text>
</comment>
<comment type="subcellular location">
    <subcellularLocation>
        <location evidence="2">Secreted</location>
    </subcellularLocation>
    <subcellularLocation>
        <location evidence="3">Nematocyst</location>
    </subcellularLocation>
    <subcellularLocation>
        <location evidence="2">Target cell membrane</location>
    </subcellularLocation>
    <text evidence="2">Forms an alpha-helical membrane channel in the prey.</text>
</comment>
<comment type="domain">
    <text evidence="4">Composed of a long N-terminal alpha-helix and a core region rich in beta-sheet structures. Before the pore formation, the alpha-helix binds the lipid membrane, partitions into the lipid-water interface and stabilizes the monomeric molecule on the membrane. Finally, it traverses the bilayer, thus forming the transmembrane pore.</text>
</comment>
<comment type="similarity">
    <text evidence="8">Belongs to the actinoporin family. Sea anemone subfamily.</text>
</comment>
<keyword id="KW-0165">Cleavage on pair of basic residues</keyword>
<keyword id="KW-0204">Cytolysis</keyword>
<keyword id="KW-0406">Ion transport</keyword>
<keyword id="KW-0472">Membrane</keyword>
<keyword id="KW-0166">Nematocyst</keyword>
<keyword id="KW-0964">Secreted</keyword>
<keyword id="KW-0732">Signal</keyword>
<keyword id="KW-1052">Target cell membrane</keyword>
<keyword id="KW-1053">Target membrane</keyword>
<keyword id="KW-0800">Toxin</keyword>
<keyword id="KW-0812">Transmembrane</keyword>
<keyword id="KW-0813">Transport</keyword>
<name>ACTP5_ACTEQ</name>